<gene>
    <name evidence="1" type="primary">glyS</name>
    <name type="ordered locus">MGAS9429_Spy1382</name>
</gene>
<dbReference type="EC" id="6.1.1.14" evidence="1"/>
<dbReference type="EMBL" id="CP000259">
    <property type="protein sequence ID" value="ABF32569.1"/>
    <property type="molecule type" value="Genomic_DNA"/>
</dbReference>
<dbReference type="RefSeq" id="WP_002988865.1">
    <property type="nucleotide sequence ID" value="NC_008021.1"/>
</dbReference>
<dbReference type="SMR" id="Q1JKK0"/>
<dbReference type="KEGG" id="spk:MGAS9429_Spy1382"/>
<dbReference type="HOGENOM" id="CLU_007220_2_2_9"/>
<dbReference type="Proteomes" id="UP000002433">
    <property type="component" value="Chromosome"/>
</dbReference>
<dbReference type="GO" id="GO:0005829">
    <property type="term" value="C:cytosol"/>
    <property type="evidence" value="ECO:0007669"/>
    <property type="project" value="TreeGrafter"/>
</dbReference>
<dbReference type="GO" id="GO:0005524">
    <property type="term" value="F:ATP binding"/>
    <property type="evidence" value="ECO:0007669"/>
    <property type="project" value="UniProtKB-UniRule"/>
</dbReference>
<dbReference type="GO" id="GO:0004820">
    <property type="term" value="F:glycine-tRNA ligase activity"/>
    <property type="evidence" value="ECO:0007669"/>
    <property type="project" value="UniProtKB-UniRule"/>
</dbReference>
<dbReference type="GO" id="GO:0006426">
    <property type="term" value="P:glycyl-tRNA aminoacylation"/>
    <property type="evidence" value="ECO:0007669"/>
    <property type="project" value="UniProtKB-UniRule"/>
</dbReference>
<dbReference type="HAMAP" id="MF_00255">
    <property type="entry name" value="Gly_tRNA_synth_beta"/>
    <property type="match status" value="1"/>
</dbReference>
<dbReference type="InterPro" id="IPR015944">
    <property type="entry name" value="Gly-tRNA-synth_bsu"/>
</dbReference>
<dbReference type="InterPro" id="IPR006194">
    <property type="entry name" value="Gly-tRNA-synth_heterodimer"/>
</dbReference>
<dbReference type="NCBIfam" id="TIGR00211">
    <property type="entry name" value="glyS"/>
    <property type="match status" value="1"/>
</dbReference>
<dbReference type="PANTHER" id="PTHR30075:SF2">
    <property type="entry name" value="GLYCINE--TRNA LIGASE, CHLOROPLASTIC_MITOCHONDRIAL 2"/>
    <property type="match status" value="1"/>
</dbReference>
<dbReference type="PANTHER" id="PTHR30075">
    <property type="entry name" value="GLYCYL-TRNA SYNTHETASE"/>
    <property type="match status" value="1"/>
</dbReference>
<dbReference type="Pfam" id="PF02092">
    <property type="entry name" value="tRNA_synt_2f"/>
    <property type="match status" value="1"/>
</dbReference>
<dbReference type="PRINTS" id="PR01045">
    <property type="entry name" value="TRNASYNTHGB"/>
</dbReference>
<dbReference type="SUPFAM" id="SSF109604">
    <property type="entry name" value="HD-domain/PDEase-like"/>
    <property type="match status" value="1"/>
</dbReference>
<dbReference type="PROSITE" id="PS50861">
    <property type="entry name" value="AA_TRNA_LIGASE_II_GLYAB"/>
    <property type="match status" value="1"/>
</dbReference>
<proteinExistence type="inferred from homology"/>
<protein>
    <recommendedName>
        <fullName evidence="1">Glycine--tRNA ligase beta subunit</fullName>
        <ecNumber evidence="1">6.1.1.14</ecNumber>
    </recommendedName>
    <alternativeName>
        <fullName evidence="1">Glycyl-tRNA synthetase beta subunit</fullName>
        <shortName evidence="1">GlyRS</shortName>
    </alternativeName>
</protein>
<organism>
    <name type="scientific">Streptococcus pyogenes serotype M12 (strain MGAS9429)</name>
    <dbReference type="NCBI Taxonomy" id="370551"/>
    <lineage>
        <taxon>Bacteria</taxon>
        <taxon>Bacillati</taxon>
        <taxon>Bacillota</taxon>
        <taxon>Bacilli</taxon>
        <taxon>Lactobacillales</taxon>
        <taxon>Streptococcaceae</taxon>
        <taxon>Streptococcus</taxon>
    </lineage>
</organism>
<sequence length="679" mass="75101">MSKNLLIELGLEELPAYVVTPSEKQLGERLATFLTENRLSFEDIQTFSTPRRLAVRVSGLADQQTDLTEDFKGPAKKIALDADGNFSKAAQGFVRGKGLTTDAIEFREVKGEEYVYVTKHEAGKPAKEVLLGVTEVLSAMTFPVSMHWANNSFEYIRPVHTLTVLLNDEALELDFLDIHSGRVSRGHRFLGTETTITSADSYEADLRSQCVIVDAKERQEMIVEQIKTLEVEQGVQVDIDEDLLNEVLNLVEFPTAFMGNFEAKYLDVPEEVLVTSMKNHQRYFVVRDQAGHLMPNFVSVRNGNDQAIENVIKGNEKVLVARLEDGEFFWREDQKLQIADLVAKLTNVTFHEKIGSLAEHMDRTRVIAASLAKEANLSAEEVTAVDRAAQIYKFDLLTGMVGEFDELQGIMGEKYALLAGEDAAVATAIREHYLPDAAGGALPETKVGVVLALADKLDTLLSFFSVGLIPSGSNDPYALRRATQGIVRILDHFGWRIPMDKLVDSLYDLSFDSLTYTNKADVMNFIRARVDKMMGKAAPKDIREAILASSTFVVPEMLAVAEALVKASHTENYKPAVESLSRAFNLAEKADASVQVDPSLFENEQENTLFAAIQGLTLAGSAAQQLEQVFALSPVINDFFDNTMVMAEDQALKNNRVAILSDLVSKAKTIAAFNQLNTK</sequence>
<keyword id="KW-0030">Aminoacyl-tRNA synthetase</keyword>
<keyword id="KW-0067">ATP-binding</keyword>
<keyword id="KW-0963">Cytoplasm</keyword>
<keyword id="KW-0436">Ligase</keyword>
<keyword id="KW-0547">Nucleotide-binding</keyword>
<keyword id="KW-0648">Protein biosynthesis</keyword>
<comment type="catalytic activity">
    <reaction evidence="1">
        <text>tRNA(Gly) + glycine + ATP = glycyl-tRNA(Gly) + AMP + diphosphate</text>
        <dbReference type="Rhea" id="RHEA:16013"/>
        <dbReference type="Rhea" id="RHEA-COMP:9664"/>
        <dbReference type="Rhea" id="RHEA-COMP:9683"/>
        <dbReference type="ChEBI" id="CHEBI:30616"/>
        <dbReference type="ChEBI" id="CHEBI:33019"/>
        <dbReference type="ChEBI" id="CHEBI:57305"/>
        <dbReference type="ChEBI" id="CHEBI:78442"/>
        <dbReference type="ChEBI" id="CHEBI:78522"/>
        <dbReference type="ChEBI" id="CHEBI:456215"/>
        <dbReference type="EC" id="6.1.1.14"/>
    </reaction>
</comment>
<comment type="subunit">
    <text evidence="1">Tetramer of two alpha and two beta subunits.</text>
</comment>
<comment type="subcellular location">
    <subcellularLocation>
        <location evidence="1">Cytoplasm</location>
    </subcellularLocation>
</comment>
<comment type="similarity">
    <text evidence="1">Belongs to the class-II aminoacyl-tRNA synthetase family.</text>
</comment>
<name>SYGB_STRPC</name>
<reference key="1">
    <citation type="journal article" date="2006" name="Proc. Natl. Acad. Sci. U.S.A.">
        <title>Molecular genetic anatomy of inter- and intraserotype variation in the human bacterial pathogen group A Streptococcus.</title>
        <authorList>
            <person name="Beres S.B."/>
            <person name="Richter E.W."/>
            <person name="Nagiec M.J."/>
            <person name="Sumby P."/>
            <person name="Porcella S.F."/>
            <person name="DeLeo F.R."/>
            <person name="Musser J.M."/>
        </authorList>
    </citation>
    <scope>NUCLEOTIDE SEQUENCE [LARGE SCALE GENOMIC DNA]</scope>
    <source>
        <strain>MGAS9429</strain>
    </source>
</reference>
<accession>Q1JKK0</accession>
<feature type="chain" id="PRO_1000101350" description="Glycine--tRNA ligase beta subunit">
    <location>
        <begin position="1"/>
        <end position="679"/>
    </location>
</feature>
<evidence type="ECO:0000255" key="1">
    <source>
        <dbReference type="HAMAP-Rule" id="MF_00255"/>
    </source>
</evidence>